<reference key="1">
    <citation type="submission" date="2007-10" db="EMBL/GenBank/DDBJ databases">
        <title>Complete sequence of Methanococcus maripaludis C6.</title>
        <authorList>
            <consortium name="US DOE Joint Genome Institute"/>
            <person name="Copeland A."/>
            <person name="Lucas S."/>
            <person name="Lapidus A."/>
            <person name="Barry K."/>
            <person name="Glavina del Rio T."/>
            <person name="Dalin E."/>
            <person name="Tice H."/>
            <person name="Pitluck S."/>
            <person name="Clum A."/>
            <person name="Schmutz J."/>
            <person name="Larimer F."/>
            <person name="Land M."/>
            <person name="Hauser L."/>
            <person name="Kyrpides N."/>
            <person name="Mikhailova N."/>
            <person name="Sieprawska-Lupa M."/>
            <person name="Whitman W.B."/>
            <person name="Richardson P."/>
        </authorList>
    </citation>
    <scope>NUCLEOTIDE SEQUENCE [LARGE SCALE GENOMIC DNA]</scope>
    <source>
        <strain>C6 / ATCC BAA-1332</strain>
    </source>
</reference>
<evidence type="ECO:0000255" key="1">
    <source>
        <dbReference type="HAMAP-Rule" id="MF_01265"/>
    </source>
</evidence>
<keyword id="KW-0520">NAD</keyword>
<keyword id="KW-0521">NADP</keyword>
<keyword id="KW-0560">Oxidoreductase</keyword>
<keyword id="KW-0662">Pyridine nucleotide biosynthesis</keyword>
<gene>
    <name evidence="1" type="primary">nadX</name>
    <name type="ordered locus">MmarC6_0148</name>
</gene>
<sequence>MLKIGVVGCGAIASLITKALMSDRLNKAEVLAFYDGNLEKAEKLAMETGADFCRSLDELVSKDLDLIVECASVTAVEDTVIKSLNNGKDVIIMSVGALADKDLFLKLYKLAEKLGRKIYIPSGAIAGIDAVKSGSLGKISDVTLTTTKPVHGLKSALEEQGLNTDEIKEPKVVFEGTVFEAISKFPQNINVSVVLSLASRYPAKVKIIADPNAVVNRHEILVKGSIGTIKTCVENNPCRDNPKTSALAAYSVIRLIKDLSEPVRIGT</sequence>
<organism>
    <name type="scientific">Methanococcus maripaludis (strain C6 / ATCC BAA-1332)</name>
    <dbReference type="NCBI Taxonomy" id="444158"/>
    <lineage>
        <taxon>Archaea</taxon>
        <taxon>Methanobacteriati</taxon>
        <taxon>Methanobacteriota</taxon>
        <taxon>Methanomada group</taxon>
        <taxon>Methanococci</taxon>
        <taxon>Methanococcales</taxon>
        <taxon>Methanococcaceae</taxon>
        <taxon>Methanococcus</taxon>
    </lineage>
</organism>
<protein>
    <recommendedName>
        <fullName evidence="1">L-aspartate dehydrogenase</fullName>
        <ecNumber evidence="1">1.4.1.21</ecNumber>
    </recommendedName>
</protein>
<comment type="function">
    <text evidence="1">Specifically catalyzes the NAD or NADP-dependent dehydrogenation of L-aspartate to iminoaspartate.</text>
</comment>
<comment type="catalytic activity">
    <reaction evidence="1">
        <text>L-aspartate + NADP(+) + H2O = oxaloacetate + NH4(+) + NADPH + H(+)</text>
        <dbReference type="Rhea" id="RHEA:11784"/>
        <dbReference type="ChEBI" id="CHEBI:15377"/>
        <dbReference type="ChEBI" id="CHEBI:15378"/>
        <dbReference type="ChEBI" id="CHEBI:16452"/>
        <dbReference type="ChEBI" id="CHEBI:28938"/>
        <dbReference type="ChEBI" id="CHEBI:29991"/>
        <dbReference type="ChEBI" id="CHEBI:57783"/>
        <dbReference type="ChEBI" id="CHEBI:58349"/>
        <dbReference type="EC" id="1.4.1.21"/>
    </reaction>
</comment>
<comment type="catalytic activity">
    <reaction evidence="1">
        <text>L-aspartate + NAD(+) + H2O = oxaloacetate + NH4(+) + NADH + H(+)</text>
        <dbReference type="Rhea" id="RHEA:11788"/>
        <dbReference type="ChEBI" id="CHEBI:15377"/>
        <dbReference type="ChEBI" id="CHEBI:15378"/>
        <dbReference type="ChEBI" id="CHEBI:16452"/>
        <dbReference type="ChEBI" id="CHEBI:28938"/>
        <dbReference type="ChEBI" id="CHEBI:29991"/>
        <dbReference type="ChEBI" id="CHEBI:57540"/>
        <dbReference type="ChEBI" id="CHEBI:57945"/>
        <dbReference type="EC" id="1.4.1.21"/>
    </reaction>
</comment>
<comment type="pathway">
    <text evidence="1">Cofactor biosynthesis; NAD(+) biosynthesis; iminoaspartate from L-aspartate (dehydrogenase route): step 1/1.</text>
</comment>
<comment type="miscellaneous">
    <text evidence="1">The iminoaspartate product is unstable in aqueous solution and can decompose to oxaloacetate and ammonia.</text>
</comment>
<comment type="similarity">
    <text evidence="1">Belongs to the L-aspartate dehydrogenase family.</text>
</comment>
<feature type="chain" id="PRO_1000140087" description="L-aspartate dehydrogenase">
    <location>
        <begin position="1"/>
        <end position="267"/>
    </location>
</feature>
<feature type="active site" evidence="1">
    <location>
        <position position="218"/>
    </location>
</feature>
<feature type="binding site" evidence="1">
    <location>
        <position position="124"/>
    </location>
    <ligand>
        <name>NAD(+)</name>
        <dbReference type="ChEBI" id="CHEBI:57540"/>
    </ligand>
</feature>
<feature type="binding site" evidence="1">
    <location>
        <position position="190"/>
    </location>
    <ligand>
        <name>NAD(+)</name>
        <dbReference type="ChEBI" id="CHEBI:57540"/>
    </ligand>
</feature>
<accession>A9A7M3</accession>
<proteinExistence type="inferred from homology"/>
<dbReference type="EC" id="1.4.1.21" evidence="1"/>
<dbReference type="EMBL" id="CP000867">
    <property type="protein sequence ID" value="ABX00971.1"/>
    <property type="molecule type" value="Genomic_DNA"/>
</dbReference>
<dbReference type="SMR" id="A9A7M3"/>
<dbReference type="STRING" id="444158.MmarC6_0148"/>
<dbReference type="KEGG" id="mmx:MmarC6_0148"/>
<dbReference type="eggNOG" id="arCOG00254">
    <property type="taxonomic scope" value="Archaea"/>
</dbReference>
<dbReference type="HOGENOM" id="CLU_089550_0_0_2"/>
<dbReference type="OrthoDB" id="15415at2157"/>
<dbReference type="PhylomeDB" id="A9A7M3"/>
<dbReference type="UniPathway" id="UPA00253">
    <property type="reaction ID" value="UER00456"/>
</dbReference>
<dbReference type="GO" id="GO:0033735">
    <property type="term" value="F:aspartate dehydrogenase activity"/>
    <property type="evidence" value="ECO:0007669"/>
    <property type="project" value="UniProtKB-EC"/>
</dbReference>
<dbReference type="GO" id="GO:0051287">
    <property type="term" value="F:NAD binding"/>
    <property type="evidence" value="ECO:0007669"/>
    <property type="project" value="UniProtKB-UniRule"/>
</dbReference>
<dbReference type="GO" id="GO:0050661">
    <property type="term" value="F:NADP binding"/>
    <property type="evidence" value="ECO:0007669"/>
    <property type="project" value="UniProtKB-UniRule"/>
</dbReference>
<dbReference type="GO" id="GO:0016639">
    <property type="term" value="F:oxidoreductase activity, acting on the CH-NH2 group of donors, NAD or NADP as acceptor"/>
    <property type="evidence" value="ECO:0007669"/>
    <property type="project" value="UniProtKB-UniRule"/>
</dbReference>
<dbReference type="GO" id="GO:0009435">
    <property type="term" value="P:NAD biosynthetic process"/>
    <property type="evidence" value="ECO:0007669"/>
    <property type="project" value="UniProtKB-UniRule"/>
</dbReference>
<dbReference type="Gene3D" id="3.30.360.10">
    <property type="entry name" value="Dihydrodipicolinate Reductase, domain 2"/>
    <property type="match status" value="1"/>
</dbReference>
<dbReference type="Gene3D" id="3.40.50.720">
    <property type="entry name" value="NAD(P)-binding Rossmann-like Domain"/>
    <property type="match status" value="1"/>
</dbReference>
<dbReference type="HAMAP" id="MF_01265">
    <property type="entry name" value="NadX"/>
    <property type="match status" value="1"/>
</dbReference>
<dbReference type="InterPro" id="IPR005106">
    <property type="entry name" value="Asp/hSer_DH_NAD-bd"/>
</dbReference>
<dbReference type="InterPro" id="IPR002811">
    <property type="entry name" value="Asp_DH"/>
</dbReference>
<dbReference type="InterPro" id="IPR022487">
    <property type="entry name" value="Asp_DH_arc"/>
</dbReference>
<dbReference type="InterPro" id="IPR020626">
    <property type="entry name" value="Asp_DH_prok"/>
</dbReference>
<dbReference type="InterPro" id="IPR011182">
    <property type="entry name" value="L-Asp_DH"/>
</dbReference>
<dbReference type="InterPro" id="IPR036291">
    <property type="entry name" value="NAD(P)-bd_dom_sf"/>
</dbReference>
<dbReference type="NCBIfam" id="TIGR03855">
    <property type="entry name" value="NAD_NadX"/>
    <property type="match status" value="1"/>
</dbReference>
<dbReference type="NCBIfam" id="NF009828">
    <property type="entry name" value="PRK13303.1-3"/>
    <property type="match status" value="1"/>
</dbReference>
<dbReference type="NCBIfam" id="NF009830">
    <property type="entry name" value="PRK13304.1"/>
    <property type="match status" value="1"/>
</dbReference>
<dbReference type="PANTHER" id="PTHR31873:SF6">
    <property type="entry name" value="ASPARTATE DEHYDROGENASE DOMAIN-CONTAINING PROTEIN"/>
    <property type="match status" value="1"/>
</dbReference>
<dbReference type="PANTHER" id="PTHR31873">
    <property type="entry name" value="L-ASPARTATE DEHYDROGENASE-RELATED"/>
    <property type="match status" value="1"/>
</dbReference>
<dbReference type="Pfam" id="PF01958">
    <property type="entry name" value="Asp_DH_C"/>
    <property type="match status" value="1"/>
</dbReference>
<dbReference type="Pfam" id="PF03447">
    <property type="entry name" value="NAD_binding_3"/>
    <property type="match status" value="1"/>
</dbReference>
<dbReference type="PIRSF" id="PIRSF005227">
    <property type="entry name" value="Asp_dh_NAD_syn"/>
    <property type="match status" value="1"/>
</dbReference>
<dbReference type="SUPFAM" id="SSF55347">
    <property type="entry name" value="Glyceraldehyde-3-phosphate dehydrogenase-like, C-terminal domain"/>
    <property type="match status" value="1"/>
</dbReference>
<dbReference type="SUPFAM" id="SSF51735">
    <property type="entry name" value="NAD(P)-binding Rossmann-fold domains"/>
    <property type="match status" value="1"/>
</dbReference>
<name>ASPD_METM6</name>